<proteinExistence type="evidence at protein level"/>
<name>PGDH_HUMAN</name>
<sequence length="266" mass="28977">MHVNGKVALVTGAAQGIGRAFAEALLLKGAKVALVDWNLEAGVQCKAALDEQFEPQKTLFIQCDVADQQQLRDTFRKVVDHFGRLDILVNNAGVNNEKNWEKTLQINLVSVISGTYLGLDYMSKQNGGEGGIIINMSSLAGLMPVAQQPVYCASKHGIVGFTRSAALAANLMNSGVRLNAICPGFVNTAILESIEKEENMGQYIEYKDHIKDMIKYYGILDPPLIANGLITLIEDDALNGAIMKITTSKGIHFQDYDTTPFQAKTQ</sequence>
<comment type="function">
    <text evidence="1 4 5 6 11 12 13 14">Catalyzes the NAD-dependent dehydrogenation (oxidation) of a broad array of hydroxylated polyunsaturated fatty acids (mainly eicosanoids and docosanoids, including prostaglandins, lipoxins and resolvins), yielding their corresponding keto (oxo) metabolites (PubMed:10837478, PubMed:16757471, PubMed:16828555, PubMed:21916491, PubMed:25586183, PubMed:8086429). Decreases the levels of the pro-proliferative prostaglandins such as prostaglandin E2 (whose activity is increased in cancer because of an increase in the expression of cyclooxygenase 2) and generates oxo-fatty acid products that can profoundly influence cell function by abrogating pro-inflammatory cytokine expression (PubMed:15574495, PubMed:25586183). Converts resolvins E1, D1 and D2 to their oxo products, which represents a mode of resolvin inactivation. Resolvin E1 plays important roles during the resolution phase of acute inflammation, while resolvins D1 and D2 have a unique role in obesity-induced adipose inflammation (PubMed:16757471, PubMed:22844113).</text>
</comment>
<comment type="catalytic activity">
    <reaction evidence="3 4 5 6 13 14">
        <text>prostaglandin E2 + NAD(+) = 15-oxoprostaglandin E2 + NADH + H(+)</text>
        <dbReference type="Rhea" id="RHEA:11876"/>
        <dbReference type="ChEBI" id="CHEBI:15378"/>
        <dbReference type="ChEBI" id="CHEBI:57400"/>
        <dbReference type="ChEBI" id="CHEBI:57540"/>
        <dbReference type="ChEBI" id="CHEBI:57945"/>
        <dbReference type="ChEBI" id="CHEBI:606564"/>
        <dbReference type="EC" id="1.1.1.141"/>
    </reaction>
    <physiologicalReaction direction="left-to-right" evidence="4 6 13">
        <dbReference type="Rhea" id="RHEA:11877"/>
    </physiologicalReaction>
</comment>
<comment type="catalytic activity">
    <reaction evidence="11">
        <text>(15S)-hydroxy-(5Z,8Z,11Z,13E)-eicosatetraenoate + NAD(+) = 15-oxo-(5Z,8Z,11Z,13E)-eicosatetraenoate + NADH + H(+)</text>
        <dbReference type="Rhea" id="RHEA:23260"/>
        <dbReference type="ChEBI" id="CHEBI:15378"/>
        <dbReference type="ChEBI" id="CHEBI:57409"/>
        <dbReference type="ChEBI" id="CHEBI:57410"/>
        <dbReference type="ChEBI" id="CHEBI:57540"/>
        <dbReference type="ChEBI" id="CHEBI:57945"/>
        <dbReference type="EC" id="1.1.1.232"/>
    </reaction>
    <physiologicalReaction direction="left-to-right" evidence="21">
        <dbReference type="Rhea" id="RHEA:23261"/>
    </physiologicalReaction>
</comment>
<comment type="catalytic activity">
    <reaction evidence="11">
        <text>(11R)-hydroxy-(5Z,8Z,12E,14Z)-eicosatetraenoate + NAD(+) = 11-oxo-(5Z,8Z,12E,14Z)-eicosatetraenoate + NADH + H(+)</text>
        <dbReference type="Rhea" id="RHEA:48640"/>
        <dbReference type="ChEBI" id="CHEBI:15378"/>
        <dbReference type="ChEBI" id="CHEBI:57540"/>
        <dbReference type="ChEBI" id="CHEBI:57945"/>
        <dbReference type="ChEBI" id="CHEBI:78836"/>
        <dbReference type="ChEBI" id="CHEBI:90697"/>
    </reaction>
    <physiologicalReaction direction="left-to-right" evidence="21">
        <dbReference type="Rhea" id="RHEA:48641"/>
    </physiologicalReaction>
</comment>
<comment type="catalytic activity">
    <reaction evidence="1">
        <text>lipoxin A4 + NAD(+) = 15-oxo-(5S,6R)-dihydroxy-(7E,9E,11Z,13E)-eicosatetraenoate + NADH + H(+)</text>
        <dbReference type="Rhea" id="RHEA:41572"/>
        <dbReference type="ChEBI" id="CHEBI:15378"/>
        <dbReference type="ChEBI" id="CHEBI:57540"/>
        <dbReference type="ChEBI" id="CHEBI:57945"/>
        <dbReference type="ChEBI" id="CHEBI:67026"/>
        <dbReference type="ChEBI" id="CHEBI:78311"/>
    </reaction>
    <physiologicalReaction direction="left-to-right" evidence="19">
        <dbReference type="Rhea" id="RHEA:41573"/>
    </physiologicalReaction>
</comment>
<comment type="catalytic activity">
    <reaction evidence="1">
        <text>15-oxo-(5S,6R)-dihydroxy-(7E,9E,11Z)-eicosatrienoate + NADH + H(+) = (5S,6R,15S)-trihydroxy-(7E,9E,11Z)-eicosatrienoate + NAD(+)</text>
        <dbReference type="Rhea" id="RHEA:41596"/>
        <dbReference type="ChEBI" id="CHEBI:15378"/>
        <dbReference type="ChEBI" id="CHEBI:57540"/>
        <dbReference type="ChEBI" id="CHEBI:57945"/>
        <dbReference type="ChEBI" id="CHEBI:78325"/>
        <dbReference type="ChEBI" id="CHEBI:78329"/>
    </reaction>
    <physiologicalReaction direction="left-to-right" evidence="19">
        <dbReference type="Rhea" id="RHEA:41597"/>
    </physiologicalReaction>
</comment>
<comment type="catalytic activity">
    <reaction evidence="14">
        <text>prostaglandin A1 + NAD(+) = 15-oxo-prostaglandin A1 + NADH + H(+)</text>
        <dbReference type="Rhea" id="RHEA:41263"/>
        <dbReference type="ChEBI" id="CHEBI:15378"/>
        <dbReference type="ChEBI" id="CHEBI:57398"/>
        <dbReference type="ChEBI" id="CHEBI:57540"/>
        <dbReference type="ChEBI" id="CHEBI:57945"/>
        <dbReference type="ChEBI" id="CHEBI:85072"/>
    </reaction>
    <physiologicalReaction direction="left-to-right" evidence="23">
        <dbReference type="Rhea" id="RHEA:41264"/>
    </physiologicalReaction>
</comment>
<comment type="catalytic activity">
    <reaction evidence="14">
        <text>prostaglandin E1 + NAD(+) = 15-oxoprostaglandin E1 + NADH + H(+)</text>
        <dbReference type="Rhea" id="RHEA:16477"/>
        <dbReference type="ChEBI" id="CHEBI:15378"/>
        <dbReference type="ChEBI" id="CHEBI:57397"/>
        <dbReference type="ChEBI" id="CHEBI:57401"/>
        <dbReference type="ChEBI" id="CHEBI:57540"/>
        <dbReference type="ChEBI" id="CHEBI:57945"/>
    </reaction>
    <physiologicalReaction direction="left-to-right" evidence="23">
        <dbReference type="Rhea" id="RHEA:16478"/>
    </physiologicalReaction>
</comment>
<comment type="catalytic activity">
    <reaction evidence="13">
        <text>14-hydroxy-(4Z,7Z,10Z,12E,16Z,19Z)-docosahexaenoate + NAD(+) = 14-oxo-(4Z,7Z,10Z,12E,16Z,19Z)-docosahexaenoate + NADH + H(+)</text>
        <dbReference type="Rhea" id="RHEA:48952"/>
        <dbReference type="ChEBI" id="CHEBI:15378"/>
        <dbReference type="ChEBI" id="CHEBI:57540"/>
        <dbReference type="ChEBI" id="CHEBI:57945"/>
        <dbReference type="ChEBI" id="CHEBI:90866"/>
        <dbReference type="ChEBI" id="CHEBI:90867"/>
    </reaction>
    <physiologicalReaction direction="left-to-right" evidence="13">
        <dbReference type="Rhea" id="RHEA:48953"/>
    </physiologicalReaction>
</comment>
<comment type="catalytic activity">
    <reaction evidence="5">
        <text>resolvin E1 + NAD(+) = 18-oxo-resolvin E1 + NADH + H(+)</text>
        <dbReference type="Rhea" id="RHEA:49244"/>
        <dbReference type="ChEBI" id="CHEBI:15378"/>
        <dbReference type="ChEBI" id="CHEBI:57540"/>
        <dbReference type="ChEBI" id="CHEBI:57945"/>
        <dbReference type="ChEBI" id="CHEBI:91000"/>
        <dbReference type="ChEBI" id="CHEBI:91001"/>
    </reaction>
    <physiologicalReaction direction="left-to-right" evidence="20">
        <dbReference type="Rhea" id="RHEA:49245"/>
    </physiologicalReaction>
</comment>
<comment type="catalytic activity">
    <reaction evidence="12">
        <text>resolvin D1 + NAD(+) = 8-oxoresolvin D1 + NADH + H(+)</text>
        <dbReference type="Rhea" id="RHEA:50124"/>
        <dbReference type="ChEBI" id="CHEBI:15378"/>
        <dbReference type="ChEBI" id="CHEBI:57540"/>
        <dbReference type="ChEBI" id="CHEBI:57945"/>
        <dbReference type="ChEBI" id="CHEBI:132079"/>
        <dbReference type="ChEBI" id="CHEBI:132080"/>
    </reaction>
    <physiologicalReaction direction="left-to-right" evidence="22">
        <dbReference type="Rhea" id="RHEA:50125"/>
    </physiologicalReaction>
</comment>
<comment type="catalytic activity">
    <reaction evidence="12">
        <text>resolvin D1 + NAD(+) = 17-oxoresolvin D1 + NADH + H(+)</text>
        <dbReference type="Rhea" id="RHEA:50128"/>
        <dbReference type="ChEBI" id="CHEBI:15378"/>
        <dbReference type="ChEBI" id="CHEBI:57540"/>
        <dbReference type="ChEBI" id="CHEBI:57945"/>
        <dbReference type="ChEBI" id="CHEBI:132079"/>
        <dbReference type="ChEBI" id="CHEBI:132081"/>
    </reaction>
    <physiologicalReaction direction="left-to-right" evidence="22">
        <dbReference type="Rhea" id="RHEA:50129"/>
    </physiologicalReaction>
</comment>
<comment type="catalytic activity">
    <reaction evidence="12">
        <text>resolvin D2 + NAD(+) = 7-oxoresolvin D2 + NADH + H(+)</text>
        <dbReference type="Rhea" id="RHEA:53584"/>
        <dbReference type="ChEBI" id="CHEBI:15378"/>
        <dbReference type="ChEBI" id="CHEBI:57540"/>
        <dbReference type="ChEBI" id="CHEBI:57945"/>
        <dbReference type="ChEBI" id="CHEBI:133367"/>
        <dbReference type="ChEBI" id="CHEBI:137497"/>
    </reaction>
    <physiologicalReaction direction="left-to-right" evidence="22">
        <dbReference type="Rhea" id="RHEA:53585"/>
    </physiologicalReaction>
</comment>
<comment type="catalytic activity">
    <reaction evidence="12">
        <text>resolvin D2 + NAD(+) = 16-oxoresolvin D2 + NADH + H(+)</text>
        <dbReference type="Rhea" id="RHEA:53588"/>
        <dbReference type="ChEBI" id="CHEBI:15378"/>
        <dbReference type="ChEBI" id="CHEBI:57540"/>
        <dbReference type="ChEBI" id="CHEBI:57945"/>
        <dbReference type="ChEBI" id="CHEBI:133367"/>
        <dbReference type="ChEBI" id="CHEBI:137498"/>
    </reaction>
    <physiologicalReaction direction="left-to-right" evidence="22">
        <dbReference type="Rhea" id="RHEA:53589"/>
    </physiologicalReaction>
</comment>
<comment type="biophysicochemical properties">
    <kinetics>
        <KM evidence="6 14">3.4 uM for prostaglandin E2</KM>
        <KM evidence="14">5.5 uM for prostaglandin E1</KM>
        <KM evidence="14">4.5 uM for prostaglandin A1</KM>
        <KM evidence="14">22 uM for prostaglandin A2</KM>
        <KM evidence="11">3.42 uM for (11R)-hydroxy-(5Z,8Z,12E,14Z)-eicosatetraenoate</KM>
        <KM evidence="11">1.65 uM for (5Z,8Z,11Z,13E,15S)-hydroxyeicosatetraenoate</KM>
        <KM evidence="14">22 uM for NAD in the presence of prostaglandin E1</KM>
        <KM evidence="6">38 uM for NAD in the presence of prostaglandin E2</KM>
        <Vmax evidence="11">296.0 nmol/min/mg enzyme toward (11R)-hydroxy-(5Z,8Z,12E,14Z)-eicosatetraenoate</Vmax>
        <Vmax evidence="11">403.8 nmol/min/mg enzyme toward (5Z,8Z,11Z,13E,15S)-hydroxyeicosatetraenoate</Vmax>
        <Vmax evidence="14">13.1 umol/min/mg enzyme toward prostaglandin A2</Vmax>
        <Vmax evidence="14">21.58 umol/min/mg enzyme toward prostaglandin A1</Vmax>
        <Vmax evidence="14">24.98 umol/min/mg enzyme toward NAD in the presence of prostaglandin E1</Vmax>
        <Vmax evidence="14">22.8 umol/min/mg enzyme toward prostaglandin E1</Vmax>
        <Vmax evidence="14">24.6 umol/min/mg enzyme toward prostaglandin E2</Vmax>
        <text evidence="11">kcat is 8.6 min(-1) with (11R)-hydroxy-(5Z,8Z,12E,14Z)-eicosatetraenoate and (5Z,8Z,11Z,13E,15S)-hydroxyeicosatetraenoate as substrates.</text>
    </kinetics>
</comment>
<comment type="subunit">
    <text evidence="10">Homodimer.</text>
</comment>
<comment type="subcellular location">
    <subcellularLocation>
        <location>Cytoplasm</location>
    </subcellularLocation>
</comment>
<comment type="alternative products">
    <event type="alternative splicing"/>
    <isoform>
        <id>P15428-1</id>
        <name>1</name>
        <sequence type="displayed"/>
    </isoform>
    <isoform>
        <id>P15428-2</id>
        <name>2</name>
        <sequence type="described" ref="VSP_043032"/>
    </isoform>
    <isoform>
        <id>P15428-3</id>
        <name>3</name>
        <sequence type="described" ref="VSP_045106"/>
    </isoform>
    <isoform>
        <id>P15428-4</id>
        <name>4</name>
        <sequence type="described" ref="VSP_045107 VSP_045108"/>
    </isoform>
    <isoform>
        <id>P15428-5</id>
        <name>5</name>
        <sequence type="described" ref="VSP_045579"/>
    </isoform>
</comment>
<comment type="tissue specificity">
    <text evidence="4">Detected in colon epithelium (at protein level).</text>
</comment>
<comment type="induction">
    <text evidence="2 4">Down-regulated by cortisol, dexamethasone and betamethasone. Down-regulated in colon cancer. Up-regulated by TGFB1.</text>
</comment>
<comment type="disease" evidence="7">
    <disease id="DI-02204">
        <name>Hypertrophic osteoarthropathy, primary, autosomal recessive, 1</name>
        <acronym>PHOAR1</acronym>
        <description>A disease characterized by digital clubbing, periostosis, acroosteolysis, painful joint enlargement, and variable features of pachydermia that include thickened facial skin and a thickened scalp. Other developmental anomalies include delayed closure of the cranial sutures and congenital heart disease.</description>
        <dbReference type="MIM" id="259100"/>
    </disease>
    <text>The disease is caused by variants affecting the gene represented in this entry.</text>
</comment>
<comment type="disease" evidence="7">
    <disease id="DI-01446">
        <name>Cranioosteoarthropathy</name>
        <acronym>COA</acronym>
        <description>A form of osteoarthropathy characterized by swelling of the joints, digital clubbing, hyperhidrosis, delayed closure of the fontanels, periostosis, and variable patent ductus arteriosus. Pachydermia is not a prominent feature.</description>
        <dbReference type="MIM" id="259100"/>
    </disease>
    <text>The disease is caused by variants affecting the gene represented in this entry.</text>
</comment>
<comment type="disease" evidence="8">
    <disease id="DI-02474">
        <name>Digital clubbing, isolated congenital</name>
        <acronym>DIGC</acronym>
        <description>A rare genodermatosis characterized by enlargement of the nail plate and terminal segments of the fingers and toes, resulting from proliferation of the connective tissues between the nail matrix and the distal phalanx. It is usually symmetrical and bilateral (in some cases unilateral). In nail clubbing usually the distal end of the nail matrix is relatively high compared to the proximal end, while the nail plate is complete but its dimensions and diameter more or less vary in comparison to normal. There may be different fingers and toes involved to varying degrees. Some fingers or toes are spared, but the thumbs are almost always involved.</description>
        <dbReference type="MIM" id="119900"/>
    </disease>
    <text>The disease is caused by variants affecting the gene represented in this entry.</text>
</comment>
<comment type="similarity">
    <text evidence="18">Belongs to the short-chain dehydrogenases/reductases (SDR) family.</text>
</comment>
<feature type="chain" id="PRO_0000054744" description="15-hydroxyprostaglandin dehydrogenase [NAD(+)]">
    <location>
        <begin position="1"/>
        <end position="266"/>
    </location>
</feature>
<feature type="active site" description="Proton acceptor">
    <location>
        <position position="151"/>
    </location>
</feature>
<feature type="binding site" evidence="10">
    <location>
        <begin position="12"/>
        <end position="20"/>
    </location>
    <ligand>
        <name>NAD(+)</name>
        <dbReference type="ChEBI" id="CHEBI:57540"/>
    </ligand>
</feature>
<feature type="binding site" evidence="10">
    <location>
        <begin position="36"/>
        <end position="37"/>
    </location>
    <ligand>
        <name>NAD(+)</name>
        <dbReference type="ChEBI" id="CHEBI:57540"/>
    </ligand>
</feature>
<feature type="binding site" evidence="10">
    <location>
        <begin position="63"/>
        <end position="65"/>
    </location>
    <ligand>
        <name>NAD(+)</name>
        <dbReference type="ChEBI" id="CHEBI:57540"/>
    </ligand>
</feature>
<feature type="binding site" evidence="10">
    <location>
        <position position="91"/>
    </location>
    <ligand>
        <name>NAD(+)</name>
        <dbReference type="ChEBI" id="CHEBI:57540"/>
    </ligand>
</feature>
<feature type="binding site" evidence="18">
    <location>
        <position position="138"/>
    </location>
    <ligand>
        <name>substrate</name>
    </ligand>
</feature>
<feature type="binding site" evidence="18">
    <location>
        <position position="148"/>
    </location>
    <ligand>
        <name>substrate</name>
    </ligand>
</feature>
<feature type="binding site" evidence="10">
    <location>
        <begin position="151"/>
        <end position="155"/>
    </location>
    <ligand>
        <name>NAD(+)</name>
        <dbReference type="ChEBI" id="CHEBI:57540"/>
    </ligand>
</feature>
<feature type="binding site" evidence="10">
    <location>
        <begin position="186"/>
        <end position="188"/>
    </location>
    <ligand>
        <name>NAD(+)</name>
        <dbReference type="ChEBI" id="CHEBI:57540"/>
    </ligand>
</feature>
<feature type="splice variant" id="VSP_045106" description="In isoform 3." evidence="15">
    <location>
        <begin position="1"/>
        <end position="121"/>
    </location>
</feature>
<feature type="splice variant" id="VSP_045579" description="In isoform 5." evidence="15">
    <location>
        <begin position="73"/>
        <end position="140"/>
    </location>
</feature>
<feature type="splice variant" id="VSP_045107" description="In isoform 4." evidence="17">
    <original>AGLM</original>
    <variation>AAHH</variation>
    <location>
        <begin position="140"/>
        <end position="143"/>
    </location>
</feature>
<feature type="splice variant" id="VSP_045108" description="In isoform 4." evidence="17">
    <location>
        <begin position="144"/>
        <end position="266"/>
    </location>
</feature>
<feature type="splice variant" id="VSP_043032" description="In isoform 2." evidence="15 16">
    <original>LAANLMNSGVRLNAICPGFVNTAILESIEKEENMGQYIEYKDHIKDMIKYYGILDPPLIANGLITLIEDDALNGAIMKITTSKGIHFQDYDTTPFQAKTQ</original>
    <variation>PTIDCQWIDNTH</variation>
    <location>
        <begin position="167"/>
        <end position="266"/>
    </location>
</feature>
<feature type="sequence variant" id="VAR_046209" description="In COA; inactive; dbSNP:rs121434480." evidence="7">
    <original>A</original>
    <variation>P</variation>
    <location>
        <position position="140"/>
    </location>
</feature>
<feature type="sequence variant" id="VAR_060792" description="In DIGC; dbSNP:rs121434481." evidence="8">
    <original>S</original>
    <variation>P</variation>
    <location>
        <position position="193"/>
    </location>
</feature>
<feature type="sequence variant" id="VAR_006972" description="In dbSNP:rs140209262.">
    <original>Y</original>
    <variation>C</variation>
    <location>
        <position position="217"/>
    </location>
</feature>
<feature type="mutagenesis site" description="Loss of activity." evidence="6">
    <original>Q</original>
    <variation>A</variation>
    <location>
        <position position="148"/>
    </location>
</feature>
<feature type="mutagenesis site" description="Reduced affinity for NAD and prostaglandin E2." evidence="6">
    <original>Q</original>
    <variation>E</variation>
    <variation>H</variation>
    <variation>N</variation>
    <location>
        <position position="148"/>
    </location>
</feature>
<feature type="mutagenesis site" description="Loss of activity." evidence="9">
    <original>Y</original>
    <variation>A</variation>
    <location>
        <position position="151"/>
    </location>
</feature>
<feature type="mutagenesis site" description="Loss 15-hydroxyprostaglandin dehydrogenase activity." evidence="14">
    <original>Y</original>
    <variation>F</variation>
    <location>
        <position position="151"/>
    </location>
</feature>
<feature type="mutagenesis site" description="Loss 15-hydroxyprostaglandin dehydrogenase activity." evidence="14">
    <original>K</original>
    <variation>Q</variation>
    <location>
        <position position="155"/>
    </location>
</feature>
<feature type="sequence conflict" description="In Ref. 2; AAA89175/AAA89174." evidence="18" ref="2">
    <original>D</original>
    <variation>H</variation>
    <location>
        <position position="50"/>
    </location>
</feature>
<feature type="sequence conflict" description="In Ref. 3; CAA57843." evidence="18" ref="3">
    <original>E</original>
    <variation>K</variation>
    <location>
        <position position="97"/>
    </location>
</feature>
<feature type="sequence conflict" description="In Ref. 5; BAG61916." evidence="18" ref="5">
    <original>I</original>
    <variation>V</variation>
    <location>
        <position position="219"/>
    </location>
</feature>
<feature type="strand" evidence="25">
    <location>
        <begin position="7"/>
        <end position="11"/>
    </location>
</feature>
<feature type="turn" evidence="25">
    <location>
        <begin position="12"/>
        <end position="14"/>
    </location>
</feature>
<feature type="helix" evidence="25">
    <location>
        <begin position="16"/>
        <end position="27"/>
    </location>
</feature>
<feature type="strand" evidence="25">
    <location>
        <begin position="31"/>
        <end position="37"/>
    </location>
</feature>
<feature type="helix" evidence="25">
    <location>
        <begin position="39"/>
        <end position="49"/>
    </location>
</feature>
<feature type="turn" evidence="25">
    <location>
        <begin position="50"/>
        <end position="52"/>
    </location>
</feature>
<feature type="helix" evidence="25">
    <location>
        <begin position="55"/>
        <end position="57"/>
    </location>
</feature>
<feature type="strand" evidence="25">
    <location>
        <begin position="58"/>
        <end position="62"/>
    </location>
</feature>
<feature type="helix" evidence="25">
    <location>
        <begin position="68"/>
        <end position="82"/>
    </location>
</feature>
<feature type="strand" evidence="25">
    <location>
        <begin position="87"/>
        <end position="90"/>
    </location>
</feature>
<feature type="strand" evidence="25">
    <location>
        <begin position="97"/>
        <end position="99"/>
    </location>
</feature>
<feature type="helix" evidence="25">
    <location>
        <begin position="100"/>
        <end position="107"/>
    </location>
</feature>
<feature type="helix" evidence="25">
    <location>
        <begin position="109"/>
        <end position="122"/>
    </location>
</feature>
<feature type="helix" evidence="25">
    <location>
        <begin position="124"/>
        <end position="126"/>
    </location>
</feature>
<feature type="strand" evidence="25">
    <location>
        <begin position="131"/>
        <end position="136"/>
    </location>
</feature>
<feature type="helix" evidence="25">
    <location>
        <begin position="139"/>
        <end position="141"/>
    </location>
</feature>
<feature type="helix" evidence="25">
    <location>
        <begin position="149"/>
        <end position="172"/>
    </location>
</feature>
<feature type="strand" evidence="25">
    <location>
        <begin position="176"/>
        <end position="184"/>
    </location>
</feature>
<feature type="strand" evidence="25">
    <location>
        <begin position="186"/>
        <end position="188"/>
    </location>
</feature>
<feature type="helix" evidence="25">
    <location>
        <begin position="189"/>
        <end position="192"/>
    </location>
</feature>
<feature type="helix" evidence="25">
    <location>
        <begin position="193"/>
        <end position="195"/>
    </location>
</feature>
<feature type="helix" evidence="25">
    <location>
        <begin position="197"/>
        <end position="200"/>
    </location>
</feature>
<feature type="helix" evidence="25">
    <location>
        <begin position="201"/>
        <end position="206"/>
    </location>
</feature>
<feature type="helix" evidence="25">
    <location>
        <begin position="207"/>
        <end position="217"/>
    </location>
</feature>
<feature type="helix" evidence="25">
    <location>
        <begin position="222"/>
        <end position="234"/>
    </location>
</feature>
<feature type="strand" evidence="25">
    <location>
        <begin position="242"/>
        <end position="246"/>
    </location>
</feature>
<feature type="turn" evidence="25">
    <location>
        <begin position="247"/>
        <end position="249"/>
    </location>
</feature>
<feature type="strand" evidence="25">
    <location>
        <begin position="250"/>
        <end position="253"/>
    </location>
</feature>
<keyword id="KW-0002">3D-structure</keyword>
<keyword id="KW-0025">Alternative splicing</keyword>
<keyword id="KW-0963">Cytoplasm</keyword>
<keyword id="KW-0903">Direct protein sequencing</keyword>
<keyword id="KW-0225">Disease variant</keyword>
<keyword id="KW-0276">Fatty acid metabolism</keyword>
<keyword id="KW-0443">Lipid metabolism</keyword>
<keyword id="KW-0520">NAD</keyword>
<keyword id="KW-0560">Oxidoreductase</keyword>
<keyword id="KW-0644">Prostaglandin metabolism</keyword>
<keyword id="KW-1267">Proteomics identification</keyword>
<keyword id="KW-1185">Reference proteome</keyword>
<keyword id="KW-0043">Tumor suppressor</keyword>
<reference key="1">
    <citation type="journal article" date="1990" name="Biochemistry">
        <title>Purification and structural characterization of placental NAD(+)-linked 15-hydroxyprostaglandin dehydrogenase. The primary structure reveals the enzyme to belong to the short-chain alcohol dehydrogenase family.</title>
        <authorList>
            <person name="Krook M."/>
            <person name="Marekov L."/>
            <person name="Joernvall H."/>
        </authorList>
    </citation>
    <scope>PROTEIN SEQUENCE</scope>
    <source>
        <tissue>Placenta</tissue>
    </source>
</reference>
<reference key="2">
    <citation type="journal article" date="1990" name="J. Biol. Chem.">
        <title>Cloning and sequence analysis of the cDNA for human placental NAD(+)-dependent 15-hydroxyprostaglandin dehydrogenase.</title>
        <authorList>
            <person name="Ensor C.M."/>
            <person name="Yang J.Y."/>
            <person name="Okita R.T."/>
            <person name="Tai H.-H."/>
        </authorList>
    </citation>
    <scope>NUCLEOTIDE SEQUENCE [MRNA] (ISOFORM 1)</scope>
    <source>
        <tissue>Placenta</tissue>
    </source>
</reference>
<reference key="3">
    <citation type="journal article" date="1995" name="Gene">
        <title>Sequence of a novel mRNA coding for a C-terminal-truncated form of human NAD(+)-dependent 15-hydroxyprostaglandin dehydrogenase.</title>
        <authorList>
            <person name="Pichaud F."/>
            <person name="Frendo J.L."/>
            <person name="Delage-Mourroux R."/>
            <person name="de Vernejoul M.C."/>
            <person name="Moukhtar M.S."/>
            <person name="Jullienne A."/>
        </authorList>
    </citation>
    <scope>NUCLEOTIDE SEQUENCE [MRNA] (ISOFORM 2)</scope>
    <source>
        <tissue>Leukemia</tissue>
    </source>
</reference>
<reference key="4">
    <citation type="journal article" date="1997" name="Gene">
        <title>Cloning and sequencing of a new 15-hydroxyprostaglandin dehydrogenase related mRNA.</title>
        <authorList>
            <person name="Delage-Mourroux R."/>
            <person name="Pichaud F."/>
            <person name="Frendo J.L."/>
            <person name="Pidoux E."/>
            <person name="Guliana J.M."/>
            <person name="Moukhtar M.S."/>
            <person name="Jullienne A."/>
        </authorList>
    </citation>
    <scope>NUCLEOTIDE SEQUENCE [MRNA] (ISOFORM 4)</scope>
</reference>
<reference key="5">
    <citation type="journal article" date="2004" name="Nat. Genet.">
        <title>Complete sequencing and characterization of 21,243 full-length human cDNAs.</title>
        <authorList>
            <person name="Ota T."/>
            <person name="Suzuki Y."/>
            <person name="Nishikawa T."/>
            <person name="Otsuki T."/>
            <person name="Sugiyama T."/>
            <person name="Irie R."/>
            <person name="Wakamatsu A."/>
            <person name="Hayashi K."/>
            <person name="Sato H."/>
            <person name="Nagai K."/>
            <person name="Kimura K."/>
            <person name="Makita H."/>
            <person name="Sekine M."/>
            <person name="Obayashi M."/>
            <person name="Nishi T."/>
            <person name="Shibahara T."/>
            <person name="Tanaka T."/>
            <person name="Ishii S."/>
            <person name="Yamamoto J."/>
            <person name="Saito K."/>
            <person name="Kawai Y."/>
            <person name="Isono Y."/>
            <person name="Nakamura Y."/>
            <person name="Nagahari K."/>
            <person name="Murakami K."/>
            <person name="Yasuda T."/>
            <person name="Iwayanagi T."/>
            <person name="Wagatsuma M."/>
            <person name="Shiratori A."/>
            <person name="Sudo H."/>
            <person name="Hosoiri T."/>
            <person name="Kaku Y."/>
            <person name="Kodaira H."/>
            <person name="Kondo H."/>
            <person name="Sugawara M."/>
            <person name="Takahashi M."/>
            <person name="Kanda K."/>
            <person name="Yokoi T."/>
            <person name="Furuya T."/>
            <person name="Kikkawa E."/>
            <person name="Omura Y."/>
            <person name="Abe K."/>
            <person name="Kamihara K."/>
            <person name="Katsuta N."/>
            <person name="Sato K."/>
            <person name="Tanikawa M."/>
            <person name="Yamazaki M."/>
            <person name="Ninomiya K."/>
            <person name="Ishibashi T."/>
            <person name="Yamashita H."/>
            <person name="Murakawa K."/>
            <person name="Fujimori K."/>
            <person name="Tanai H."/>
            <person name="Kimata M."/>
            <person name="Watanabe M."/>
            <person name="Hiraoka S."/>
            <person name="Chiba Y."/>
            <person name="Ishida S."/>
            <person name="Ono Y."/>
            <person name="Takiguchi S."/>
            <person name="Watanabe S."/>
            <person name="Yosida M."/>
            <person name="Hotuta T."/>
            <person name="Kusano J."/>
            <person name="Kanehori K."/>
            <person name="Takahashi-Fujii A."/>
            <person name="Hara H."/>
            <person name="Tanase T.-O."/>
            <person name="Nomura Y."/>
            <person name="Togiya S."/>
            <person name="Komai F."/>
            <person name="Hara R."/>
            <person name="Takeuchi K."/>
            <person name="Arita M."/>
            <person name="Imose N."/>
            <person name="Musashino K."/>
            <person name="Yuuki H."/>
            <person name="Oshima A."/>
            <person name="Sasaki N."/>
            <person name="Aotsuka S."/>
            <person name="Yoshikawa Y."/>
            <person name="Matsunawa H."/>
            <person name="Ichihara T."/>
            <person name="Shiohata N."/>
            <person name="Sano S."/>
            <person name="Moriya S."/>
            <person name="Momiyama H."/>
            <person name="Satoh N."/>
            <person name="Takami S."/>
            <person name="Terashima Y."/>
            <person name="Suzuki O."/>
            <person name="Nakagawa S."/>
            <person name="Senoh A."/>
            <person name="Mizoguchi H."/>
            <person name="Goto Y."/>
            <person name="Shimizu F."/>
            <person name="Wakebe H."/>
            <person name="Hishigaki H."/>
            <person name="Watanabe T."/>
            <person name="Sugiyama A."/>
            <person name="Takemoto M."/>
            <person name="Kawakami B."/>
            <person name="Yamazaki M."/>
            <person name="Watanabe K."/>
            <person name="Kumagai A."/>
            <person name="Itakura S."/>
            <person name="Fukuzumi Y."/>
            <person name="Fujimori Y."/>
            <person name="Komiyama M."/>
            <person name="Tashiro H."/>
            <person name="Tanigami A."/>
            <person name="Fujiwara T."/>
            <person name="Ono T."/>
            <person name="Yamada K."/>
            <person name="Fujii Y."/>
            <person name="Ozaki K."/>
            <person name="Hirao M."/>
            <person name="Ohmori Y."/>
            <person name="Kawabata A."/>
            <person name="Hikiji T."/>
            <person name="Kobatake N."/>
            <person name="Inagaki H."/>
            <person name="Ikema Y."/>
            <person name="Okamoto S."/>
            <person name="Okitani R."/>
            <person name="Kawakami T."/>
            <person name="Noguchi S."/>
            <person name="Itoh T."/>
            <person name="Shigeta K."/>
            <person name="Senba T."/>
            <person name="Matsumura K."/>
            <person name="Nakajima Y."/>
            <person name="Mizuno T."/>
            <person name="Morinaga M."/>
            <person name="Sasaki M."/>
            <person name="Togashi T."/>
            <person name="Oyama M."/>
            <person name="Hata H."/>
            <person name="Watanabe M."/>
            <person name="Komatsu T."/>
            <person name="Mizushima-Sugano J."/>
            <person name="Satoh T."/>
            <person name="Shirai Y."/>
            <person name="Takahashi Y."/>
            <person name="Nakagawa K."/>
            <person name="Okumura K."/>
            <person name="Nagase T."/>
            <person name="Nomura N."/>
            <person name="Kikuchi H."/>
            <person name="Masuho Y."/>
            <person name="Yamashita R."/>
            <person name="Nakai K."/>
            <person name="Yada T."/>
            <person name="Nakamura Y."/>
            <person name="Ohara O."/>
            <person name="Isogai T."/>
            <person name="Sugano S."/>
        </authorList>
    </citation>
    <scope>NUCLEOTIDE SEQUENCE [LARGE SCALE MRNA] (ISOFORMS 1; 2; 3 AND 5)</scope>
    <source>
        <tissue>Colon</tissue>
        <tissue>Placenta</tissue>
        <tissue>Prostate</tissue>
    </source>
</reference>
<reference key="6">
    <citation type="submission" date="2006-08" db="EMBL/GenBank/DDBJ databases">
        <authorList>
            <consortium name="SeattleSNPs variation discovery resource"/>
        </authorList>
    </citation>
    <scope>NUCLEOTIDE SEQUENCE [GENOMIC DNA]</scope>
</reference>
<reference key="7">
    <citation type="journal article" date="2005" name="Nature">
        <title>Generation and annotation of the DNA sequences of human chromosomes 2 and 4.</title>
        <authorList>
            <person name="Hillier L.W."/>
            <person name="Graves T.A."/>
            <person name="Fulton R.S."/>
            <person name="Fulton L.A."/>
            <person name="Pepin K.H."/>
            <person name="Minx P."/>
            <person name="Wagner-McPherson C."/>
            <person name="Layman D."/>
            <person name="Wylie K."/>
            <person name="Sekhon M."/>
            <person name="Becker M.C."/>
            <person name="Fewell G.A."/>
            <person name="Delehaunty K.D."/>
            <person name="Miner T.L."/>
            <person name="Nash W.E."/>
            <person name="Kremitzki C."/>
            <person name="Oddy L."/>
            <person name="Du H."/>
            <person name="Sun H."/>
            <person name="Bradshaw-Cordum H."/>
            <person name="Ali J."/>
            <person name="Carter J."/>
            <person name="Cordes M."/>
            <person name="Harris A."/>
            <person name="Isak A."/>
            <person name="van Brunt A."/>
            <person name="Nguyen C."/>
            <person name="Du F."/>
            <person name="Courtney L."/>
            <person name="Kalicki J."/>
            <person name="Ozersky P."/>
            <person name="Abbott S."/>
            <person name="Armstrong J."/>
            <person name="Belter E.A."/>
            <person name="Caruso L."/>
            <person name="Cedroni M."/>
            <person name="Cotton M."/>
            <person name="Davidson T."/>
            <person name="Desai A."/>
            <person name="Elliott G."/>
            <person name="Erb T."/>
            <person name="Fronick C."/>
            <person name="Gaige T."/>
            <person name="Haakenson W."/>
            <person name="Haglund K."/>
            <person name="Holmes A."/>
            <person name="Harkins R."/>
            <person name="Kim K."/>
            <person name="Kruchowski S.S."/>
            <person name="Strong C.M."/>
            <person name="Grewal N."/>
            <person name="Goyea E."/>
            <person name="Hou S."/>
            <person name="Levy A."/>
            <person name="Martinka S."/>
            <person name="Mead K."/>
            <person name="McLellan M.D."/>
            <person name="Meyer R."/>
            <person name="Randall-Maher J."/>
            <person name="Tomlinson C."/>
            <person name="Dauphin-Kohlberg S."/>
            <person name="Kozlowicz-Reilly A."/>
            <person name="Shah N."/>
            <person name="Swearengen-Shahid S."/>
            <person name="Snider J."/>
            <person name="Strong J.T."/>
            <person name="Thompson J."/>
            <person name="Yoakum M."/>
            <person name="Leonard S."/>
            <person name="Pearman C."/>
            <person name="Trani L."/>
            <person name="Radionenko M."/>
            <person name="Waligorski J.E."/>
            <person name="Wang C."/>
            <person name="Rock S.M."/>
            <person name="Tin-Wollam A.-M."/>
            <person name="Maupin R."/>
            <person name="Latreille P."/>
            <person name="Wendl M.C."/>
            <person name="Yang S.-P."/>
            <person name="Pohl C."/>
            <person name="Wallis J.W."/>
            <person name="Spieth J."/>
            <person name="Bieri T.A."/>
            <person name="Berkowicz N."/>
            <person name="Nelson J.O."/>
            <person name="Osborne J."/>
            <person name="Ding L."/>
            <person name="Meyer R."/>
            <person name="Sabo A."/>
            <person name="Shotland Y."/>
            <person name="Sinha P."/>
            <person name="Wohldmann P.E."/>
            <person name="Cook L.L."/>
            <person name="Hickenbotham M.T."/>
            <person name="Eldred J."/>
            <person name="Williams D."/>
            <person name="Jones T.A."/>
            <person name="She X."/>
            <person name="Ciccarelli F.D."/>
            <person name="Izaurralde E."/>
            <person name="Taylor J."/>
            <person name="Schmutz J."/>
            <person name="Myers R.M."/>
            <person name="Cox D.R."/>
            <person name="Huang X."/>
            <person name="McPherson J.D."/>
            <person name="Mardis E.R."/>
            <person name="Clifton S.W."/>
            <person name="Warren W.C."/>
            <person name="Chinwalla A.T."/>
            <person name="Eddy S.R."/>
            <person name="Marra M.A."/>
            <person name="Ovcharenko I."/>
            <person name="Furey T.S."/>
            <person name="Miller W."/>
            <person name="Eichler E.E."/>
            <person name="Bork P."/>
            <person name="Suyama M."/>
            <person name="Torrents D."/>
            <person name="Waterston R.H."/>
            <person name="Wilson R.K."/>
        </authorList>
    </citation>
    <scope>NUCLEOTIDE SEQUENCE [LARGE SCALE GENOMIC DNA]</scope>
</reference>
<reference key="8">
    <citation type="submission" date="2005-09" db="EMBL/GenBank/DDBJ databases">
        <authorList>
            <person name="Mural R.J."/>
            <person name="Istrail S."/>
            <person name="Sutton G.G."/>
            <person name="Florea L."/>
            <person name="Halpern A.L."/>
            <person name="Mobarry C.M."/>
            <person name="Lippert R."/>
            <person name="Walenz B."/>
            <person name="Shatkay H."/>
            <person name="Dew I."/>
            <person name="Miller J.R."/>
            <person name="Flanigan M.J."/>
            <person name="Edwards N.J."/>
            <person name="Bolanos R."/>
            <person name="Fasulo D."/>
            <person name="Halldorsson B.V."/>
            <person name="Hannenhalli S."/>
            <person name="Turner R."/>
            <person name="Yooseph S."/>
            <person name="Lu F."/>
            <person name="Nusskern D.R."/>
            <person name="Shue B.C."/>
            <person name="Zheng X.H."/>
            <person name="Zhong F."/>
            <person name="Delcher A.L."/>
            <person name="Huson D.H."/>
            <person name="Kravitz S.A."/>
            <person name="Mouchard L."/>
            <person name="Reinert K."/>
            <person name="Remington K.A."/>
            <person name="Clark A.G."/>
            <person name="Waterman M.S."/>
            <person name="Eichler E.E."/>
            <person name="Adams M.D."/>
            <person name="Hunkapiller M.W."/>
            <person name="Myers E.W."/>
            <person name="Venter J.C."/>
        </authorList>
    </citation>
    <scope>NUCLEOTIDE SEQUENCE [LARGE SCALE GENOMIC DNA]</scope>
</reference>
<reference key="9">
    <citation type="journal article" date="2004" name="Genome Res.">
        <title>The status, quality, and expansion of the NIH full-length cDNA project: the Mammalian Gene Collection (MGC).</title>
        <authorList>
            <consortium name="The MGC Project Team"/>
        </authorList>
    </citation>
    <scope>NUCLEOTIDE SEQUENCE [LARGE SCALE MRNA] (ISOFORM 1)</scope>
    <source>
        <tissue>Pancreas</tissue>
    </source>
</reference>
<reference key="10">
    <citation type="journal article" date="1991" name="Biochem. Biophys. Res. Commun.">
        <title>Site-directed mutagenesis of the conserved tyrosine 151 of human placental NAD(+)-dependent 15-hydroxyprostaglandin dehydrogenase yields a catalytically inactive enzyme.</title>
        <authorList>
            <person name="Ensor C.M."/>
            <person name="Tai H.-H."/>
        </authorList>
    </citation>
    <scope>MUTAGENESIS OF TYR-151</scope>
</reference>
<reference key="11">
    <citation type="journal article" date="1994" name="Biochim. Biophys. Acta">
        <title>Bacterial expression and site-directed mutagenesis of two critical residues (tyrosine-151 and lysine-155) of human placental NAD(+)-dependent 15-hydroxyprostaglandin dehydrogenase.</title>
        <authorList>
            <person name="Ensor C.M."/>
            <person name="Tai H.H."/>
        </authorList>
    </citation>
    <scope>CATALYTIC ACTIVITY</scope>
    <scope>FUNCTION</scope>
    <scope>BIOPHYSICOCHEMICAL PROPERTIES</scope>
    <scope>MUTAGENESIS OF TYR-151 AND LYS-155</scope>
</reference>
<reference key="12">
    <citation type="journal article" date="2000" name="J. Biol. Chem.">
        <title>Oxidoreductases in lipoxin A4 metabolic inactivation: a novel role for 15-onoprostaglandin 13-reductase/leukotriene B4 12-hydroxydehydrogenase in inflammation.</title>
        <authorList>
            <person name="Clish C.B."/>
            <person name="Levy B.D."/>
            <person name="Chiang N."/>
            <person name="Tai H.-H."/>
            <person name="Serhan C.N."/>
        </authorList>
    </citation>
    <scope>FUNCTION</scope>
    <scope>CATALYTIC ACTIVITY</scope>
</reference>
<reference key="13">
    <citation type="journal article" date="2003" name="J. Clin. Endocrinol. Metab.">
        <title>Mechanism of cortisol/progesterone antagonism in the regulation of 15-hydroxyprostaglandin dehydrogenase activity and messenger ribonucleic acid levels in human chorion and placental trophoblast cells at term.</title>
        <authorList>
            <person name="Patel F.A."/>
            <person name="Funder J.W."/>
            <person name="Challis J.R.G."/>
        </authorList>
    </citation>
    <scope>INDUCTION</scope>
</reference>
<reference key="14">
    <citation type="journal article" date="2004" name="Mol. Pharmacol.">
        <title>The two-step model of prostaglandin signal termination: in vitro reconstitution with the prostaglandin transporter and prostaglandin 15 dehydrogenase.</title>
        <authorList>
            <person name="Nomura T."/>
            <person name="Lu R."/>
            <person name="Pucci M.L."/>
            <person name="Schuster V.L."/>
        </authorList>
    </citation>
    <scope>CATALYTIC ACTIVITY</scope>
</reference>
<reference key="15">
    <citation type="journal article" date="2004" name="Proc. Natl. Acad. Sci. U.S.A.">
        <title>15-Hydroxyprostaglandin dehydrogenase, a COX-2 oncogene antagonist, is a TGF-beta-induced suppressor of human gastrointestinal cancers.</title>
        <authorList>
            <person name="Yan M."/>
            <person name="Rerko R.M."/>
            <person name="Platzer P."/>
            <person name="Dawson D."/>
            <person name="Willis J."/>
            <person name="Tong M."/>
            <person name="Lawrence E."/>
            <person name="Lutterbaugh J."/>
            <person name="Lu S."/>
            <person name="Willson J.K.V."/>
            <person name="Luo G."/>
            <person name="Hensold J."/>
            <person name="Tai H.-H."/>
            <person name="Wilson K."/>
            <person name="Markowitz S.D."/>
        </authorList>
    </citation>
    <scope>FUNCTION</scope>
    <scope>CATALYTIC ACTIVITY</scope>
    <scope>INDUCTION</scope>
    <scope>TISSUE SPECIFICITY</scope>
</reference>
<reference key="16">
    <citation type="journal article" date="2006" name="Bioorg. Med. Chem.">
        <title>Role of glutamine 148 of human 15-hydroxyprostaglandin dehydrogenase in catalytic oxidation of prostaglandin E2.</title>
        <authorList>
            <person name="Cho H."/>
            <person name="Huang L."/>
            <person name="Hamza A."/>
            <person name="Gao D."/>
            <person name="Zhan C.-G."/>
            <person name="Tai H.-H."/>
        </authorList>
    </citation>
    <scope>FUNCTION</scope>
    <scope>MUTAGENESIS OF GLN-148</scope>
    <scope>CATALYTIC ACTIVITY</scope>
    <scope>BIOPHYSICOCHEMICAL PROPERTIES</scope>
    <scope>3D-STRUCTURE MODELING</scope>
</reference>
<reference key="17">
    <citation type="journal article" date="2006" name="J. Biol. Chem.">
        <title>Metabolic inactivation of resolvin E1 and stabilization of its anti-inflammatory actions.</title>
        <authorList>
            <person name="Arita M."/>
            <person name="Oh S.F."/>
            <person name="Chonan T."/>
            <person name="Hong S."/>
            <person name="Elangovan S."/>
            <person name="Sun Y.P."/>
            <person name="Uddin J."/>
            <person name="Petasis N.A."/>
            <person name="Serhan C.N."/>
        </authorList>
    </citation>
    <scope>CATALYTIC ACTIVITY</scope>
    <scope>FUNCTION</scope>
</reference>
<reference key="18">
    <citation type="journal article" date="2011" name="Chem. Res. Toxicol.">
        <title>11-Oxoeicosatetraenoic acid is a cyclooxygenase-2/15-hydroxyprostaglandin dehydrogenase-derived antiproliferative eicosanoid.</title>
        <authorList>
            <person name="Liu X."/>
            <person name="Zhang S."/>
            <person name="Arora J.S."/>
            <person name="Snyder N.W."/>
            <person name="Shah S.J."/>
            <person name="Blair I.A."/>
        </authorList>
    </citation>
    <scope>CATALYTIC ACTIVITY</scope>
    <scope>FUNCTION</scope>
    <scope>BIOPHYSICOCHEMICAL PROPERTIES</scope>
</reference>
<reference key="19">
    <citation type="journal article" date="2012" name="J. Immunol.">
        <title>Resolvin D1 and resolvin D2 govern local inflammatory tone in obese fat.</title>
        <authorList>
            <person name="Claria J."/>
            <person name="Dalli J."/>
            <person name="Yacoubian S."/>
            <person name="Gao F."/>
            <person name="Serhan C.N."/>
        </authorList>
    </citation>
    <scope>CATALYTIC ACTIVITY</scope>
    <scope>FUNCTION</scope>
</reference>
<reference key="20">
    <citation type="journal article" date="2015" name="J. Biol. Chem.">
        <title>15-Hydroxyprostaglandin dehydrogenase generation of electrophilic lipid signaling mediators from hydroxy omega-3 fatty acids.</title>
        <authorList>
            <person name="Wendell S.G."/>
            <person name="Golin-Bisello F."/>
            <person name="Wenzel S."/>
            <person name="Sobol R.W."/>
            <person name="Holguin F."/>
            <person name="Freeman B.A."/>
        </authorList>
    </citation>
    <scope>CATALYTIC ACTIVITY</scope>
    <scope>FUNCTION</scope>
</reference>
<reference key="21">
    <citation type="journal article" date="1993" name="FEBS Lett.">
        <title>Three-dimensional model of NAD(+)-dependent 15-hydroxyprostaglandin dehydrogenase and relationships to the NADP(+)-dependent enzyme (carbonyl reductase).</title>
        <authorList>
            <person name="Krook M."/>
            <person name="Ghosh D."/>
            <person name="Duax W.L."/>
            <person name="Joernvall H."/>
        </authorList>
    </citation>
    <scope>3D-STRUCTURE MODELING</scope>
</reference>
<reference key="22">
    <citation type="journal article" date="2008" name="Nat. Genet.">
        <title>Mutations in 15-hydroxyprostaglandin dehydrogenase cause primary hypertrophic osteoarthropathy.</title>
        <authorList>
            <person name="Uppal S."/>
            <person name="Diggle C.P."/>
            <person name="Carr I.M."/>
            <person name="Fishwick C.W.G."/>
            <person name="Ahmed M."/>
            <person name="Ibrahim G.H."/>
            <person name="Helliwell P.S."/>
            <person name="Latos-Bielenska A."/>
            <person name="Phillips S.E.V."/>
            <person name="Markham A.F."/>
            <person name="Bennett C.P."/>
            <person name="Bonthron D.T."/>
        </authorList>
    </citation>
    <scope>INVOLVEMENT IN PHOAR1</scope>
    <scope>VARIANT COA PRO-140</scope>
    <scope>CHARACTERIZATION OF VARIANT COA PRO-140</scope>
</reference>
<reference key="23">
    <citation type="journal article" date="2008" name="Nat. Genet.">
        <authorList>
            <person name="Uppal S."/>
            <person name="Diggle C.P."/>
            <person name="Carr I.M."/>
            <person name="Fishwick C.W.G."/>
            <person name="Ahmed M."/>
            <person name="Ibrahim G.H."/>
            <person name="Helliwell P.S."/>
            <person name="Latos-Bielenska A."/>
            <person name="Phillips S.E.V."/>
            <person name="Markham A.F."/>
            <person name="Bennett C.P."/>
            <person name="Bonthron D.T."/>
        </authorList>
    </citation>
    <scope>ERRATUM OF PUBMED:18500342</scope>
</reference>
<reference key="24">
    <citation type="journal article" date="2010" name="PLoS ONE">
        <title>High-affinity inhibitors of human NAD-dependent 15-hydroxyprostaglandin dehydrogenase: mechanisms of inhibition and structure-activity relationships.</title>
        <authorList>
            <person name="Niesen F.H."/>
            <person name="Schultz L."/>
            <person name="Jadhav A."/>
            <person name="Bhatia C."/>
            <person name="Guo K."/>
            <person name="Maloney D.J."/>
            <person name="Pilka E.S."/>
            <person name="Wang M."/>
            <person name="Oppermann U."/>
            <person name="Heightman T.D."/>
            <person name="Simeonov A."/>
        </authorList>
    </citation>
    <scope>X-RAY CRYSTALLOGRAPHY (1.65 ANGSTROMS) OF 3-256 IN COMPLEX WITH NAD</scope>
</reference>
<reference key="25">
    <citation type="journal article" date="2009" name="J. Med. Genet.">
        <title>Mutation in the HPGD gene encoding NAD+ dependent 15-hydroxyprostaglandin dehydrogenase underlies isolated congenital nail clubbing (ICNC).</title>
        <authorList>
            <person name="Tariq M."/>
            <person name="Azeem Z."/>
            <person name="Ali G."/>
            <person name="Chishti M.S."/>
            <person name="Ahmad W."/>
        </authorList>
    </citation>
    <scope>VARIANT DIGC PRO-193</scope>
</reference>
<evidence type="ECO:0000269" key="1">
    <source>
    </source>
</evidence>
<evidence type="ECO:0000269" key="2">
    <source>
    </source>
</evidence>
<evidence type="ECO:0000269" key="3">
    <source>
    </source>
</evidence>
<evidence type="ECO:0000269" key="4">
    <source>
    </source>
</evidence>
<evidence type="ECO:0000269" key="5">
    <source>
    </source>
</evidence>
<evidence type="ECO:0000269" key="6">
    <source>
    </source>
</evidence>
<evidence type="ECO:0000269" key="7">
    <source>
    </source>
</evidence>
<evidence type="ECO:0000269" key="8">
    <source>
    </source>
</evidence>
<evidence type="ECO:0000269" key="9">
    <source>
    </source>
</evidence>
<evidence type="ECO:0000269" key="10">
    <source>
    </source>
</evidence>
<evidence type="ECO:0000269" key="11">
    <source>
    </source>
</evidence>
<evidence type="ECO:0000269" key="12">
    <source>
    </source>
</evidence>
<evidence type="ECO:0000269" key="13">
    <source>
    </source>
</evidence>
<evidence type="ECO:0000269" key="14">
    <source>
    </source>
</evidence>
<evidence type="ECO:0000303" key="15">
    <source>
    </source>
</evidence>
<evidence type="ECO:0000303" key="16">
    <source>
    </source>
</evidence>
<evidence type="ECO:0000303" key="17">
    <source>
    </source>
</evidence>
<evidence type="ECO:0000305" key="18"/>
<evidence type="ECO:0000305" key="19">
    <source>
    </source>
</evidence>
<evidence type="ECO:0000305" key="20">
    <source>
    </source>
</evidence>
<evidence type="ECO:0000305" key="21">
    <source>
    </source>
</evidence>
<evidence type="ECO:0000305" key="22">
    <source>
    </source>
</evidence>
<evidence type="ECO:0000305" key="23">
    <source>
    </source>
</evidence>
<evidence type="ECO:0000312" key="24">
    <source>
        <dbReference type="HGNC" id="HGNC:5154"/>
    </source>
</evidence>
<evidence type="ECO:0007829" key="25">
    <source>
        <dbReference type="PDB" id="2GDZ"/>
    </source>
</evidence>
<organism>
    <name type="scientific">Homo sapiens</name>
    <name type="common">Human</name>
    <dbReference type="NCBI Taxonomy" id="9606"/>
    <lineage>
        <taxon>Eukaryota</taxon>
        <taxon>Metazoa</taxon>
        <taxon>Chordata</taxon>
        <taxon>Craniata</taxon>
        <taxon>Vertebrata</taxon>
        <taxon>Euteleostomi</taxon>
        <taxon>Mammalia</taxon>
        <taxon>Eutheria</taxon>
        <taxon>Euarchontoglires</taxon>
        <taxon>Primates</taxon>
        <taxon>Haplorrhini</taxon>
        <taxon>Catarrhini</taxon>
        <taxon>Hominidae</taxon>
        <taxon>Homo</taxon>
    </lineage>
</organism>
<accession>P15428</accession>
<accession>B4DTA4</accession>
<accession>B4DU74</accession>
<accession>B4DV57</accession>
<accession>D3DP43</accession>
<accession>E7EV11</accession>
<accession>O00749</accession>
<accession>Q06F08</accession>
<accession>Q12998</accession>
<dbReference type="EC" id="1.1.1.141" evidence="3 4 5 6 13 14"/>
<dbReference type="EC" id="1.1.1.-" evidence="1 5 11 12 13 14"/>
<dbReference type="EC" id="1.1.1.232" evidence="11"/>
<dbReference type="EMBL" id="L76465">
    <property type="protein sequence ID" value="AAA89175.1"/>
    <property type="molecule type" value="mRNA"/>
</dbReference>
<dbReference type="EMBL" id="J05594">
    <property type="protein sequence ID" value="AAA89174.1"/>
    <property type="molecule type" value="mRNA"/>
</dbReference>
<dbReference type="EMBL" id="X82460">
    <property type="protein sequence ID" value="CAA57843.1"/>
    <property type="molecule type" value="mRNA"/>
</dbReference>
<dbReference type="EMBL" id="U63296">
    <property type="protein sequence ID" value="AAB53034.1"/>
    <property type="molecule type" value="mRNA"/>
</dbReference>
<dbReference type="EMBL" id="AK296642">
    <property type="protein sequence ID" value="BAH12408.1"/>
    <property type="molecule type" value="mRNA"/>
</dbReference>
<dbReference type="EMBL" id="AK300125">
    <property type="protein sequence ID" value="BAG61916.1"/>
    <property type="molecule type" value="mRNA"/>
</dbReference>
<dbReference type="EMBL" id="AK300524">
    <property type="protein sequence ID" value="BAG62236.1"/>
    <property type="molecule type" value="mRNA"/>
</dbReference>
<dbReference type="EMBL" id="AK300940">
    <property type="protein sequence ID" value="BAG62569.1"/>
    <property type="molecule type" value="mRNA"/>
</dbReference>
<dbReference type="EMBL" id="AK314624">
    <property type="protein sequence ID" value="BAG37190.1"/>
    <property type="molecule type" value="mRNA"/>
</dbReference>
<dbReference type="EMBL" id="DQ903072">
    <property type="protein sequence ID" value="ABI75347.1"/>
    <property type="molecule type" value="Genomic_DNA"/>
</dbReference>
<dbReference type="EMBL" id="AC096751">
    <property type="status" value="NOT_ANNOTATED_CDS"/>
    <property type="molecule type" value="Genomic_DNA"/>
</dbReference>
<dbReference type="EMBL" id="CH471056">
    <property type="protein sequence ID" value="EAX04734.1"/>
    <property type="molecule type" value="Genomic_DNA"/>
</dbReference>
<dbReference type="EMBL" id="CH471056">
    <property type="protein sequence ID" value="EAX04735.1"/>
    <property type="molecule type" value="Genomic_DNA"/>
</dbReference>
<dbReference type="EMBL" id="CH471056">
    <property type="protein sequence ID" value="EAX04736.1"/>
    <property type="molecule type" value="Genomic_DNA"/>
</dbReference>
<dbReference type="EMBL" id="CH471056">
    <property type="protein sequence ID" value="EAX04737.1"/>
    <property type="molecule type" value="Genomic_DNA"/>
</dbReference>
<dbReference type="EMBL" id="BC018986">
    <property type="protein sequence ID" value="AAH18986.1"/>
    <property type="molecule type" value="mRNA"/>
</dbReference>
<dbReference type="CCDS" id="CCDS3821.1">
    <molecule id="P15428-1"/>
</dbReference>
<dbReference type="CCDS" id="CCDS54821.1">
    <molecule id="P15428-2"/>
</dbReference>
<dbReference type="CCDS" id="CCDS58933.1">
    <molecule id="P15428-3"/>
</dbReference>
<dbReference type="CCDS" id="CCDS58934.1">
    <molecule id="P15428-5"/>
</dbReference>
<dbReference type="CCDS" id="CCDS58935.1">
    <molecule id="P15428-4"/>
</dbReference>
<dbReference type="PIR" id="A35802">
    <property type="entry name" value="A35802"/>
</dbReference>
<dbReference type="RefSeq" id="NP_000851.2">
    <molecule id="P15428-1"/>
    <property type="nucleotide sequence ID" value="NM_000860.5"/>
</dbReference>
<dbReference type="RefSeq" id="NP_001139288.1">
    <molecule id="P15428-2"/>
    <property type="nucleotide sequence ID" value="NM_001145816.3"/>
</dbReference>
<dbReference type="RefSeq" id="NP_001243230.1">
    <molecule id="P15428-3"/>
    <property type="nucleotide sequence ID" value="NM_001256301.1"/>
</dbReference>
<dbReference type="RefSeq" id="NP_001243234.1">
    <molecule id="P15428-4"/>
    <property type="nucleotide sequence ID" value="NM_001256305.2"/>
</dbReference>
<dbReference type="RefSeq" id="NP_001243235.1">
    <molecule id="P15428-5"/>
    <property type="nucleotide sequence ID" value="NM_001256306.2"/>
</dbReference>
<dbReference type="RefSeq" id="NP_001243236.1">
    <molecule id="P15428-3"/>
    <property type="nucleotide sequence ID" value="NM_001256307.2"/>
</dbReference>
<dbReference type="PDB" id="2GDZ">
    <property type="method" value="X-ray"/>
    <property type="resolution" value="1.65 A"/>
    <property type="chains" value="A=3-256"/>
</dbReference>
<dbReference type="PDB" id="8CVN">
    <property type="method" value="EM"/>
    <property type="resolution" value="2.40 A"/>
    <property type="chains" value="A/B=3-256"/>
</dbReference>
<dbReference type="PDB" id="8CWL">
    <property type="method" value="EM"/>
    <property type="resolution" value="2.90 A"/>
    <property type="chains" value="A/B=3-256"/>
</dbReference>
<dbReference type="PDB" id="8FD8">
    <property type="method" value="EM"/>
    <property type="resolution" value="3.30 A"/>
    <property type="chains" value="A/B=1-256"/>
</dbReference>
<dbReference type="PDBsum" id="2GDZ"/>
<dbReference type="PDBsum" id="8CVN"/>
<dbReference type="PDBsum" id="8CWL"/>
<dbReference type="PDBsum" id="8FD8"/>
<dbReference type="EMDB" id="EMD-27010"/>
<dbReference type="EMDB" id="EMD-27025"/>
<dbReference type="EMDB" id="EMD-29005"/>
<dbReference type="SMR" id="P15428"/>
<dbReference type="BioGRID" id="109485">
    <property type="interactions" value="13"/>
</dbReference>
<dbReference type="FunCoup" id="P15428">
    <property type="interactions" value="1481"/>
</dbReference>
<dbReference type="IntAct" id="P15428">
    <property type="interactions" value="5"/>
</dbReference>
<dbReference type="STRING" id="9606.ENSP00000296522"/>
<dbReference type="BindingDB" id="P15428"/>
<dbReference type="ChEMBL" id="CHEMBL1293255"/>
<dbReference type="DrugBank" id="DB00770">
    <property type="generic name" value="Alprostadil"/>
</dbReference>
<dbReference type="DrugBank" id="DB00157">
    <property type="generic name" value="NADH"/>
</dbReference>
<dbReference type="GuidetoPHARMACOLOGY" id="1384"/>
<dbReference type="SwissLipids" id="SLP:000000732"/>
<dbReference type="iPTMnet" id="P15428"/>
<dbReference type="PhosphoSitePlus" id="P15428"/>
<dbReference type="BioMuta" id="HPGD"/>
<dbReference type="DMDM" id="129889"/>
<dbReference type="jPOST" id="P15428"/>
<dbReference type="MassIVE" id="P15428"/>
<dbReference type="PaxDb" id="9606-ENSP00000296522"/>
<dbReference type="PeptideAtlas" id="P15428"/>
<dbReference type="ProteomicsDB" id="18546"/>
<dbReference type="ProteomicsDB" id="48016"/>
<dbReference type="ProteomicsDB" id="5156"/>
<dbReference type="ProteomicsDB" id="53141">
    <molecule id="P15428-1"/>
</dbReference>
<dbReference type="ProteomicsDB" id="53142">
    <molecule id="P15428-2"/>
</dbReference>
<dbReference type="Pumba" id="P15428"/>
<dbReference type="Antibodypedia" id="1511">
    <property type="antibodies" value="586 antibodies from 37 providers"/>
</dbReference>
<dbReference type="DNASU" id="3248"/>
<dbReference type="Ensembl" id="ENST00000296521.11">
    <molecule id="P15428-2"/>
    <property type="protein sequence ID" value="ENSP00000296521.7"/>
    <property type="gene ID" value="ENSG00000164120.14"/>
</dbReference>
<dbReference type="Ensembl" id="ENST00000296522.11">
    <molecule id="P15428-1"/>
    <property type="protein sequence ID" value="ENSP00000296522.6"/>
    <property type="gene ID" value="ENSG00000164120.14"/>
</dbReference>
<dbReference type="Ensembl" id="ENST00000422112.6">
    <molecule id="P15428-5"/>
    <property type="protein sequence ID" value="ENSP00000398720.2"/>
    <property type="gene ID" value="ENSG00000164120.14"/>
</dbReference>
<dbReference type="Ensembl" id="ENST00000510901.5">
    <molecule id="P15428-3"/>
    <property type="protein sequence ID" value="ENSP00000422418.1"/>
    <property type="gene ID" value="ENSG00000164120.14"/>
</dbReference>
<dbReference type="Ensembl" id="ENST00000541923.5">
    <molecule id="P15428-3"/>
    <property type="protein sequence ID" value="ENSP00000438017.1"/>
    <property type="gene ID" value="ENSG00000164120.14"/>
</dbReference>
<dbReference type="Ensembl" id="ENST00000542498.5">
    <molecule id="P15428-4"/>
    <property type="protein sequence ID" value="ENSP00000443644.1"/>
    <property type="gene ID" value="ENSG00000164120.14"/>
</dbReference>
<dbReference type="GeneID" id="3248"/>
<dbReference type="KEGG" id="hsa:3248"/>
<dbReference type="MANE-Select" id="ENST00000296522.11">
    <property type="protein sequence ID" value="ENSP00000296522.6"/>
    <property type="RefSeq nucleotide sequence ID" value="NM_000860.6"/>
    <property type="RefSeq protein sequence ID" value="NP_000851.2"/>
</dbReference>
<dbReference type="UCSC" id="uc003itu.3">
    <molecule id="P15428-1"/>
    <property type="organism name" value="human"/>
</dbReference>
<dbReference type="AGR" id="HGNC:5154"/>
<dbReference type="CTD" id="3248"/>
<dbReference type="DisGeNET" id="3248"/>
<dbReference type="GeneCards" id="HPGD"/>
<dbReference type="HGNC" id="HGNC:5154">
    <property type="gene designation" value="HPGD"/>
</dbReference>
<dbReference type="HPA" id="ENSG00000164120">
    <property type="expression patterns" value="Tissue enhanced (stomach, urinary bladder)"/>
</dbReference>
<dbReference type="MalaCards" id="HPGD"/>
<dbReference type="MIM" id="119900">
    <property type="type" value="phenotype"/>
</dbReference>
<dbReference type="MIM" id="259100">
    <property type="type" value="phenotype"/>
</dbReference>
<dbReference type="MIM" id="601688">
    <property type="type" value="gene"/>
</dbReference>
<dbReference type="neXtProt" id="NX_P15428"/>
<dbReference type="OpenTargets" id="ENSG00000164120"/>
<dbReference type="Orphanet" id="1525">
    <property type="disease" value="Cranio-osteoarthropathy"/>
</dbReference>
<dbReference type="Orphanet" id="217059">
    <property type="disease" value="Isolated nail clubbing"/>
</dbReference>
<dbReference type="Orphanet" id="2796">
    <property type="disease" value="Pachydermoperiostosis"/>
</dbReference>
<dbReference type="PharmGKB" id="PA29424"/>
<dbReference type="VEuPathDB" id="HostDB:ENSG00000164120"/>
<dbReference type="eggNOG" id="KOG4169">
    <property type="taxonomic scope" value="Eukaryota"/>
</dbReference>
<dbReference type="GeneTree" id="ENSGT00940000154593"/>
<dbReference type="HOGENOM" id="CLU_010194_2_19_1"/>
<dbReference type="InParanoid" id="P15428"/>
<dbReference type="OMA" id="RSHVICP"/>
<dbReference type="OrthoDB" id="37659at2759"/>
<dbReference type="PAN-GO" id="P15428">
    <property type="GO annotations" value="4 GO annotations based on evolutionary models"/>
</dbReference>
<dbReference type="PhylomeDB" id="P15428"/>
<dbReference type="TreeFam" id="TF324093"/>
<dbReference type="BioCyc" id="MetaCyc:HS09021-MONOMER"/>
<dbReference type="BRENDA" id="1.1.1.141">
    <property type="organism ID" value="2681"/>
</dbReference>
<dbReference type="BRENDA" id="1.3.1.48">
    <property type="organism ID" value="2681"/>
</dbReference>
<dbReference type="PathwayCommons" id="P15428"/>
<dbReference type="Reactome" id="R-HSA-2142700">
    <property type="pathway name" value="Biosynthesis of Lipoxins (LX)"/>
</dbReference>
<dbReference type="Reactome" id="R-HSA-2162123">
    <property type="pathway name" value="Synthesis of Prostaglandins (PG) and Thromboxanes (TX)"/>
</dbReference>
<dbReference type="Reactome" id="R-HSA-9018676">
    <property type="pathway name" value="Biosynthesis of D-series resolvins"/>
</dbReference>
<dbReference type="Reactome" id="R-HSA-9018896">
    <property type="pathway name" value="Biosynthesis of E-series 18(S)-resolvins"/>
</dbReference>
<dbReference type="SABIO-RK" id="P15428"/>
<dbReference type="SignaLink" id="P15428"/>
<dbReference type="SIGNOR" id="P15428"/>
<dbReference type="BioGRID-ORCS" id="3248">
    <property type="hits" value="12 hits in 1162 CRISPR screens"/>
</dbReference>
<dbReference type="ChiTaRS" id="HPGD">
    <property type="organism name" value="human"/>
</dbReference>
<dbReference type="EvolutionaryTrace" id="P15428"/>
<dbReference type="GeneWiki" id="HPGD"/>
<dbReference type="GenomeRNAi" id="3248"/>
<dbReference type="Pharos" id="P15428">
    <property type="development level" value="Tchem"/>
</dbReference>
<dbReference type="PRO" id="PR:P15428"/>
<dbReference type="Proteomes" id="UP000005640">
    <property type="component" value="Chromosome 4"/>
</dbReference>
<dbReference type="RNAct" id="P15428">
    <property type="molecule type" value="protein"/>
</dbReference>
<dbReference type="Bgee" id="ENSG00000164120">
    <property type="expression patterns" value="Expressed in adrenal tissue and 157 other cell types or tissues"/>
</dbReference>
<dbReference type="ExpressionAtlas" id="P15428">
    <property type="expression patterns" value="baseline and differential"/>
</dbReference>
<dbReference type="GO" id="GO:0016323">
    <property type="term" value="C:basolateral plasma membrane"/>
    <property type="evidence" value="ECO:0007669"/>
    <property type="project" value="Ensembl"/>
</dbReference>
<dbReference type="GO" id="GO:0005737">
    <property type="term" value="C:cytoplasm"/>
    <property type="evidence" value="ECO:0000318"/>
    <property type="project" value="GO_Central"/>
</dbReference>
<dbReference type="GO" id="GO:0005829">
    <property type="term" value="C:cytosol"/>
    <property type="evidence" value="ECO:0000314"/>
    <property type="project" value="HPA"/>
</dbReference>
<dbReference type="GO" id="GO:0070062">
    <property type="term" value="C:extracellular exosome"/>
    <property type="evidence" value="ECO:0007005"/>
    <property type="project" value="UniProtKB"/>
</dbReference>
<dbReference type="GO" id="GO:0005654">
    <property type="term" value="C:nucleoplasm"/>
    <property type="evidence" value="ECO:0000314"/>
    <property type="project" value="HPA"/>
</dbReference>
<dbReference type="GO" id="GO:0016404">
    <property type="term" value="F:15-hydroxyprostaglandin dehydrogenase (NAD+) activity"/>
    <property type="evidence" value="ECO:0000314"/>
    <property type="project" value="UniProtKB"/>
</dbReference>
<dbReference type="GO" id="GO:0042802">
    <property type="term" value="F:identical protein binding"/>
    <property type="evidence" value="ECO:0000353"/>
    <property type="project" value="UniProtKB"/>
</dbReference>
<dbReference type="GO" id="GO:0051287">
    <property type="term" value="F:NAD binding"/>
    <property type="evidence" value="ECO:0000314"/>
    <property type="project" value="UniProtKB"/>
</dbReference>
<dbReference type="GO" id="GO:0070403">
    <property type="term" value="F:NAD+ binding"/>
    <property type="evidence" value="ECO:0000314"/>
    <property type="project" value="UniProtKB"/>
</dbReference>
<dbReference type="GO" id="GO:0016616">
    <property type="term" value="F:oxidoreductase activity, acting on the CH-OH group of donors, NAD or NADP as acceptor"/>
    <property type="evidence" value="ECO:0000314"/>
    <property type="project" value="UniProtKB"/>
</dbReference>
<dbReference type="GO" id="GO:0004957">
    <property type="term" value="F:prostaglandin E receptor activity"/>
    <property type="evidence" value="ECO:0000314"/>
    <property type="project" value="UniProtKB"/>
</dbReference>
<dbReference type="GO" id="GO:0097070">
    <property type="term" value="P:ductus arteriosus closure"/>
    <property type="evidence" value="ECO:0000250"/>
    <property type="project" value="UniProtKB"/>
</dbReference>
<dbReference type="GO" id="GO:0007565">
    <property type="term" value="P:female pregnancy"/>
    <property type="evidence" value="ECO:0000314"/>
    <property type="project" value="UniProtKB"/>
</dbReference>
<dbReference type="GO" id="GO:0001822">
    <property type="term" value="P:kidney development"/>
    <property type="evidence" value="ECO:0007669"/>
    <property type="project" value="Ensembl"/>
</dbReference>
<dbReference type="GO" id="GO:0019372">
    <property type="term" value="P:lipoxygenase pathway"/>
    <property type="evidence" value="ECO:0000304"/>
    <property type="project" value="UniProtKB"/>
</dbReference>
<dbReference type="GO" id="GO:0045786">
    <property type="term" value="P:negative regulation of cell cycle"/>
    <property type="evidence" value="ECO:0000314"/>
    <property type="project" value="UniProtKB"/>
</dbReference>
<dbReference type="GO" id="GO:0030728">
    <property type="term" value="P:ovulation"/>
    <property type="evidence" value="ECO:0000250"/>
    <property type="project" value="UniProtKB"/>
</dbReference>
<dbReference type="GO" id="GO:0007567">
    <property type="term" value="P:parturition"/>
    <property type="evidence" value="ECO:0000314"/>
    <property type="project" value="UniProtKB"/>
</dbReference>
<dbReference type="GO" id="GO:0043065">
    <property type="term" value="P:positive regulation of apoptotic process"/>
    <property type="evidence" value="ECO:0007669"/>
    <property type="project" value="Ensembl"/>
</dbReference>
<dbReference type="GO" id="GO:1904707">
    <property type="term" value="P:positive regulation of vascular associated smooth muscle cell proliferation"/>
    <property type="evidence" value="ECO:0007669"/>
    <property type="project" value="Ensembl"/>
</dbReference>
<dbReference type="GO" id="GO:0006693">
    <property type="term" value="P:prostaglandin metabolic process"/>
    <property type="evidence" value="ECO:0000314"/>
    <property type="project" value="UniProtKB"/>
</dbReference>
<dbReference type="GO" id="GO:1905828">
    <property type="term" value="P:regulation of prostaglandin catabolic process"/>
    <property type="evidence" value="ECO:0000315"/>
    <property type="project" value="UniProtKB"/>
</dbReference>
<dbReference type="GO" id="GO:0032355">
    <property type="term" value="P:response to estradiol"/>
    <property type="evidence" value="ECO:0007669"/>
    <property type="project" value="Ensembl"/>
</dbReference>
<dbReference type="GO" id="GO:0045471">
    <property type="term" value="P:response to ethanol"/>
    <property type="evidence" value="ECO:0007669"/>
    <property type="project" value="Ensembl"/>
</dbReference>
<dbReference type="GO" id="GO:0032496">
    <property type="term" value="P:response to lipopolysaccharide"/>
    <property type="evidence" value="ECO:0007669"/>
    <property type="project" value="Ensembl"/>
</dbReference>
<dbReference type="GO" id="GO:0070493">
    <property type="term" value="P:thrombin-activated receptor signaling pathway"/>
    <property type="evidence" value="ECO:0000250"/>
    <property type="project" value="UniProtKB"/>
</dbReference>
<dbReference type="GO" id="GO:0007179">
    <property type="term" value="P:transforming growth factor beta receptor signaling pathway"/>
    <property type="evidence" value="ECO:0000314"/>
    <property type="project" value="UniProtKB"/>
</dbReference>
<dbReference type="CDD" id="cd05323">
    <property type="entry name" value="ADH_SDR_c_like"/>
    <property type="match status" value="1"/>
</dbReference>
<dbReference type="FunFam" id="3.40.50.720:FF:000149">
    <property type="entry name" value="15-hydroxyprostaglandin dehydrogenase [NAD(+)]"/>
    <property type="match status" value="1"/>
</dbReference>
<dbReference type="Gene3D" id="3.40.50.720">
    <property type="entry name" value="NAD(P)-binding Rossmann-like Domain"/>
    <property type="match status" value="1"/>
</dbReference>
<dbReference type="InterPro" id="IPR036291">
    <property type="entry name" value="NAD(P)-bd_dom_sf"/>
</dbReference>
<dbReference type="InterPro" id="IPR020904">
    <property type="entry name" value="Sc_DH/Rdtase_CS"/>
</dbReference>
<dbReference type="InterPro" id="IPR002347">
    <property type="entry name" value="SDR_fam"/>
</dbReference>
<dbReference type="PANTHER" id="PTHR44229">
    <property type="entry name" value="15-HYDROXYPROSTAGLANDIN DEHYDROGENASE [NAD(+)]"/>
    <property type="match status" value="1"/>
</dbReference>
<dbReference type="PANTHER" id="PTHR44229:SF4">
    <property type="entry name" value="15-HYDROXYPROSTAGLANDIN DEHYDROGENASE [NAD(+)]"/>
    <property type="match status" value="1"/>
</dbReference>
<dbReference type="Pfam" id="PF00106">
    <property type="entry name" value="adh_short"/>
    <property type="match status" value="1"/>
</dbReference>
<dbReference type="PRINTS" id="PR00081">
    <property type="entry name" value="GDHRDH"/>
</dbReference>
<dbReference type="PRINTS" id="PR00080">
    <property type="entry name" value="SDRFAMILY"/>
</dbReference>
<dbReference type="SUPFAM" id="SSF51735">
    <property type="entry name" value="NAD(P)-binding Rossmann-fold domains"/>
    <property type="match status" value="1"/>
</dbReference>
<dbReference type="PROSITE" id="PS00061">
    <property type="entry name" value="ADH_SHORT"/>
    <property type="match status" value="1"/>
</dbReference>
<protein>
    <recommendedName>
        <fullName evidence="18">15-hydroxyprostaglandin dehydrogenase [NAD(+)]</fullName>
        <shortName>15-PGDH</shortName>
        <ecNumber evidence="3 4 5 6 13 14">1.1.1.141</ecNumber>
    </recommendedName>
    <alternativeName>
        <fullName>Eicosanoid/docosanoid dehydrogenase [NAD(+)]</fullName>
        <ecNumber evidence="1 5 11 12 13 14">1.1.1.-</ecNumber>
        <ecNumber evidence="11">1.1.1.232</ecNumber>
    </alternativeName>
    <alternativeName>
        <fullName>Prostaglandin dehydrogenase 1</fullName>
    </alternativeName>
    <alternativeName>
        <fullName>Short chain dehydrogenase/reductase family 36C member 1</fullName>
    </alternativeName>
</protein>
<gene>
    <name evidence="24" type="primary">HPGD</name>
    <name type="synonym">PGDH1</name>
    <name type="synonym">SDR36C1</name>
</gene>